<comment type="function">
    <text evidence="1">ATP-dependent RNA helicase involved nonsense-mediated mRNA decay and ribosome biogenesis through rRNA processing.</text>
</comment>
<comment type="catalytic activity">
    <reaction>
        <text>ATP + H2O = ADP + phosphate + H(+)</text>
        <dbReference type="Rhea" id="RHEA:13065"/>
        <dbReference type="ChEBI" id="CHEBI:15377"/>
        <dbReference type="ChEBI" id="CHEBI:15378"/>
        <dbReference type="ChEBI" id="CHEBI:30616"/>
        <dbReference type="ChEBI" id="CHEBI:43474"/>
        <dbReference type="ChEBI" id="CHEBI:456216"/>
        <dbReference type="EC" id="3.6.4.13"/>
    </reaction>
</comment>
<comment type="subunit">
    <text evidence="1">Associates with polysomes.</text>
</comment>
<comment type="subcellular location">
    <subcellularLocation>
        <location evidence="1">Cytoplasm</location>
    </subcellularLocation>
    <subcellularLocation>
        <location evidence="1">Nucleus</location>
    </subcellularLocation>
</comment>
<comment type="domain">
    <text>The Q motif is unique to and characteristic of the DEAD box family of RNA helicases and controls ATP binding and hydrolysis.</text>
</comment>
<comment type="similarity">
    <text evidence="5">Belongs to the DEAD box helicase family. DDX5/DBP2 subfamily.</text>
</comment>
<dbReference type="EC" id="3.6.4.13"/>
<dbReference type="EMBL" id="CR380958">
    <property type="protein sequence ID" value="CAG61911.1"/>
    <property type="molecule type" value="Genomic_DNA"/>
</dbReference>
<dbReference type="RefSeq" id="XP_448941.1">
    <property type="nucleotide sequence ID" value="XM_448941.1"/>
</dbReference>
<dbReference type="SMR" id="Q6FLF3"/>
<dbReference type="FunCoup" id="Q6FLF3">
    <property type="interactions" value="1323"/>
</dbReference>
<dbReference type="STRING" id="284593.Q6FLF3"/>
<dbReference type="EnsemblFungi" id="CAGL0L03846g-T">
    <property type="protein sequence ID" value="CAGL0L03846g-T-p1"/>
    <property type="gene ID" value="CAGL0L03846g"/>
</dbReference>
<dbReference type="KEGG" id="cgr:2890547"/>
<dbReference type="CGD" id="CAL0135480">
    <property type="gene designation" value="CAGL0L03846g"/>
</dbReference>
<dbReference type="VEuPathDB" id="FungiDB:B1J91_L03846g"/>
<dbReference type="VEuPathDB" id="FungiDB:CAGL0L03846g"/>
<dbReference type="eggNOG" id="KOG0331">
    <property type="taxonomic scope" value="Eukaryota"/>
</dbReference>
<dbReference type="HOGENOM" id="CLU_003041_16_9_1"/>
<dbReference type="InParanoid" id="Q6FLF3"/>
<dbReference type="OMA" id="STMPKFE"/>
<dbReference type="Proteomes" id="UP000002428">
    <property type="component" value="Chromosome L"/>
</dbReference>
<dbReference type="GO" id="GO:0005737">
    <property type="term" value="C:cytoplasm"/>
    <property type="evidence" value="ECO:0007669"/>
    <property type="project" value="UniProtKB-SubCell"/>
</dbReference>
<dbReference type="GO" id="GO:0005634">
    <property type="term" value="C:nucleus"/>
    <property type="evidence" value="ECO:0007669"/>
    <property type="project" value="UniProtKB-SubCell"/>
</dbReference>
<dbReference type="GO" id="GO:0005524">
    <property type="term" value="F:ATP binding"/>
    <property type="evidence" value="ECO:0007669"/>
    <property type="project" value="UniProtKB-KW"/>
</dbReference>
<dbReference type="GO" id="GO:0016887">
    <property type="term" value="F:ATP hydrolysis activity"/>
    <property type="evidence" value="ECO:0007669"/>
    <property type="project" value="RHEA"/>
</dbReference>
<dbReference type="GO" id="GO:0051880">
    <property type="term" value="F:G-quadruplex DNA binding"/>
    <property type="evidence" value="ECO:0007669"/>
    <property type="project" value="EnsemblFungi"/>
</dbReference>
<dbReference type="GO" id="GO:0002151">
    <property type="term" value="F:G-quadruplex RNA binding"/>
    <property type="evidence" value="ECO:0007669"/>
    <property type="project" value="EnsemblFungi"/>
</dbReference>
<dbReference type="GO" id="GO:0003729">
    <property type="term" value="F:mRNA binding"/>
    <property type="evidence" value="ECO:0007669"/>
    <property type="project" value="EnsemblFungi"/>
</dbReference>
<dbReference type="GO" id="GO:0003724">
    <property type="term" value="F:RNA helicase activity"/>
    <property type="evidence" value="ECO:0007669"/>
    <property type="project" value="UniProtKB-EC"/>
</dbReference>
<dbReference type="GO" id="GO:0030515">
    <property type="term" value="F:snoRNA binding"/>
    <property type="evidence" value="ECO:0007669"/>
    <property type="project" value="EnsemblFungi"/>
</dbReference>
<dbReference type="GO" id="GO:0071042">
    <property type="term" value="P:nuclear polyadenylation-dependent mRNA catabolic process"/>
    <property type="evidence" value="ECO:0007669"/>
    <property type="project" value="EnsemblFungi"/>
</dbReference>
<dbReference type="GO" id="GO:0000184">
    <property type="term" value="P:nuclear-transcribed mRNA catabolic process, nonsense-mediated decay"/>
    <property type="evidence" value="ECO:0007669"/>
    <property type="project" value="UniProtKB-KW"/>
</dbReference>
<dbReference type="GO" id="GO:0006364">
    <property type="term" value="P:rRNA processing"/>
    <property type="evidence" value="ECO:0007669"/>
    <property type="project" value="UniProtKB-KW"/>
</dbReference>
<dbReference type="GO" id="GO:0006369">
    <property type="term" value="P:termination of RNA polymerase II transcription"/>
    <property type="evidence" value="ECO:0007669"/>
    <property type="project" value="EnsemblFungi"/>
</dbReference>
<dbReference type="CDD" id="cd17966">
    <property type="entry name" value="DEADc_DDX5_DDX17"/>
    <property type="match status" value="1"/>
</dbReference>
<dbReference type="CDD" id="cd18787">
    <property type="entry name" value="SF2_C_DEAD"/>
    <property type="match status" value="1"/>
</dbReference>
<dbReference type="FunFam" id="3.40.50.300:FF:000008">
    <property type="entry name" value="ATP-dependent RNA helicase RhlB"/>
    <property type="match status" value="1"/>
</dbReference>
<dbReference type="FunFam" id="3.40.50.300:FF:000079">
    <property type="entry name" value="probable ATP-dependent RNA helicase DDX17"/>
    <property type="match status" value="1"/>
</dbReference>
<dbReference type="Gene3D" id="3.40.50.300">
    <property type="entry name" value="P-loop containing nucleotide triphosphate hydrolases"/>
    <property type="match status" value="2"/>
</dbReference>
<dbReference type="InterPro" id="IPR011545">
    <property type="entry name" value="DEAD/DEAH_box_helicase_dom"/>
</dbReference>
<dbReference type="InterPro" id="IPR014001">
    <property type="entry name" value="Helicase_ATP-bd"/>
</dbReference>
<dbReference type="InterPro" id="IPR001650">
    <property type="entry name" value="Helicase_C-like"/>
</dbReference>
<dbReference type="InterPro" id="IPR027417">
    <property type="entry name" value="P-loop_NTPase"/>
</dbReference>
<dbReference type="InterPro" id="IPR000629">
    <property type="entry name" value="RNA-helicase_DEAD-box_CS"/>
</dbReference>
<dbReference type="InterPro" id="IPR014014">
    <property type="entry name" value="RNA_helicase_DEAD_Q_motif"/>
</dbReference>
<dbReference type="PANTHER" id="PTHR47958">
    <property type="entry name" value="ATP-DEPENDENT RNA HELICASE DBP3"/>
    <property type="match status" value="1"/>
</dbReference>
<dbReference type="Pfam" id="PF00270">
    <property type="entry name" value="DEAD"/>
    <property type="match status" value="1"/>
</dbReference>
<dbReference type="Pfam" id="PF00271">
    <property type="entry name" value="Helicase_C"/>
    <property type="match status" value="1"/>
</dbReference>
<dbReference type="SMART" id="SM00487">
    <property type="entry name" value="DEXDc"/>
    <property type="match status" value="1"/>
</dbReference>
<dbReference type="SMART" id="SM00490">
    <property type="entry name" value="HELICc"/>
    <property type="match status" value="1"/>
</dbReference>
<dbReference type="SUPFAM" id="SSF52540">
    <property type="entry name" value="P-loop containing nucleoside triphosphate hydrolases"/>
    <property type="match status" value="1"/>
</dbReference>
<dbReference type="PROSITE" id="PS00039">
    <property type="entry name" value="DEAD_ATP_HELICASE"/>
    <property type="match status" value="1"/>
</dbReference>
<dbReference type="PROSITE" id="PS51192">
    <property type="entry name" value="HELICASE_ATP_BIND_1"/>
    <property type="match status" value="1"/>
</dbReference>
<dbReference type="PROSITE" id="PS51194">
    <property type="entry name" value="HELICASE_CTER"/>
    <property type="match status" value="1"/>
</dbReference>
<dbReference type="PROSITE" id="PS51195">
    <property type="entry name" value="Q_MOTIF"/>
    <property type="match status" value="1"/>
</dbReference>
<feature type="chain" id="PRO_0000054995" description="ATP-dependent RNA helicase DBP2">
    <location>
        <begin position="1"/>
        <end position="544"/>
    </location>
</feature>
<feature type="domain" description="Helicase ATP-binding" evidence="2">
    <location>
        <begin position="141"/>
        <end position="316"/>
    </location>
</feature>
<feature type="domain" description="Helicase C-terminal" evidence="3">
    <location>
        <begin position="331"/>
        <end position="491"/>
    </location>
</feature>
<feature type="region of interest" description="Disordered" evidence="4">
    <location>
        <begin position="1"/>
        <end position="54"/>
    </location>
</feature>
<feature type="region of interest" description="Disordered" evidence="4">
    <location>
        <begin position="490"/>
        <end position="544"/>
    </location>
</feature>
<feature type="region of interest" description="RNA-binding RGG-box" evidence="1">
    <location>
        <begin position="501"/>
        <end position="528"/>
    </location>
</feature>
<feature type="short sequence motif" description="Q motif">
    <location>
        <begin position="110"/>
        <end position="138"/>
    </location>
</feature>
<feature type="short sequence motif" description="DEAD box">
    <location>
        <begin position="264"/>
        <end position="267"/>
    </location>
</feature>
<feature type="compositionally biased region" description="Basic and acidic residues" evidence="4">
    <location>
        <begin position="18"/>
        <end position="36"/>
    </location>
</feature>
<feature type="compositionally biased region" description="Gly residues" evidence="4">
    <location>
        <begin position="501"/>
        <end position="531"/>
    </location>
</feature>
<feature type="binding site" evidence="2">
    <location>
        <begin position="154"/>
        <end position="161"/>
    </location>
    <ligand>
        <name>ATP</name>
        <dbReference type="ChEBI" id="CHEBI:30616"/>
    </ligand>
</feature>
<keyword id="KW-0067">ATP-binding</keyword>
<keyword id="KW-0963">Cytoplasm</keyword>
<keyword id="KW-0347">Helicase</keyword>
<keyword id="KW-0378">Hydrolase</keyword>
<keyword id="KW-0866">Nonsense-mediated mRNA decay</keyword>
<keyword id="KW-0547">Nucleotide-binding</keyword>
<keyword id="KW-0539">Nucleus</keyword>
<keyword id="KW-1185">Reference proteome</keyword>
<keyword id="KW-0690">Ribosome biogenesis</keyword>
<keyword id="KW-0694">RNA-binding</keyword>
<keyword id="KW-0698">rRNA processing</keyword>
<protein>
    <recommendedName>
        <fullName>ATP-dependent RNA helicase DBP2</fullName>
        <ecNumber>3.6.4.13</ecNumber>
    </recommendedName>
</protein>
<proteinExistence type="inferred from homology"/>
<organism>
    <name type="scientific">Candida glabrata (strain ATCC 2001 / BCRC 20586 / JCM 3761 / NBRC 0622 / NRRL Y-65 / CBS 138)</name>
    <name type="common">Yeast</name>
    <name type="synonym">Nakaseomyces glabratus</name>
    <dbReference type="NCBI Taxonomy" id="284593"/>
    <lineage>
        <taxon>Eukaryota</taxon>
        <taxon>Fungi</taxon>
        <taxon>Dikarya</taxon>
        <taxon>Ascomycota</taxon>
        <taxon>Saccharomycotina</taxon>
        <taxon>Saccharomycetes</taxon>
        <taxon>Saccharomycetales</taxon>
        <taxon>Saccharomycetaceae</taxon>
        <taxon>Nakaseomyces</taxon>
    </lineage>
</organism>
<accession>Q6FLF3</accession>
<name>DBP2_CANGA</name>
<sequence>MGYRDALYNKTNYNSRGGDFRGGRSSDRNDYNRDRNQGYSHGGLRGRHDDGPRELIKPDWESELPNLPPFEKNFYVEHEVVRNRSDQEVAQFRKESEMTITGHDIPKPITTFDEAGFPDYVLKEVKAEGFDKPTSIQCQGWPMALSGRDMVGIAATGSGKTLSYCLPGIVHINAQPLLSPGDGPIVLVLAPTRELAVQIQKECSKFGKSSRIRNTCVYGGVPRGQQIRELIRGAEIVIATPGRLIDMLEAGKTNLKRVTYLVLDEADRMLDMGFEPQIRKIVDQIRPDRQTLMWSATWPKEVQQLARDYLNDPIQVQIGSLELAASHNITQLVEVVSEFEKRDRLVKHLDTASQDKESKILIFASTKRTCDEITSYLRQDGWPALAIHGDKDQRERDWVLNEFRTGNSPIMVATDVAARGIDVKGINFVVNYDMPGNIEDYVHRIGRTGRAGATGTAISFFTEDNKSLGASLISIMREAKQNIPEELMKYDRRPRGPHPRYGGGYGRGGRGYGGGRGGYGGRGGGRGGRGGFNRSRDGGWGNRR</sequence>
<gene>
    <name type="primary">DBP2</name>
    <name type="ordered locus">CAGL0L03846</name>
</gene>
<reference key="1">
    <citation type="journal article" date="2004" name="Nature">
        <title>Genome evolution in yeasts.</title>
        <authorList>
            <person name="Dujon B."/>
            <person name="Sherman D."/>
            <person name="Fischer G."/>
            <person name="Durrens P."/>
            <person name="Casaregola S."/>
            <person name="Lafontaine I."/>
            <person name="de Montigny J."/>
            <person name="Marck C."/>
            <person name="Neuveglise C."/>
            <person name="Talla E."/>
            <person name="Goffard N."/>
            <person name="Frangeul L."/>
            <person name="Aigle M."/>
            <person name="Anthouard V."/>
            <person name="Babour A."/>
            <person name="Barbe V."/>
            <person name="Barnay S."/>
            <person name="Blanchin S."/>
            <person name="Beckerich J.-M."/>
            <person name="Beyne E."/>
            <person name="Bleykasten C."/>
            <person name="Boisrame A."/>
            <person name="Boyer J."/>
            <person name="Cattolico L."/>
            <person name="Confanioleri F."/>
            <person name="de Daruvar A."/>
            <person name="Despons L."/>
            <person name="Fabre E."/>
            <person name="Fairhead C."/>
            <person name="Ferry-Dumazet H."/>
            <person name="Groppi A."/>
            <person name="Hantraye F."/>
            <person name="Hennequin C."/>
            <person name="Jauniaux N."/>
            <person name="Joyet P."/>
            <person name="Kachouri R."/>
            <person name="Kerrest A."/>
            <person name="Koszul R."/>
            <person name="Lemaire M."/>
            <person name="Lesur I."/>
            <person name="Ma L."/>
            <person name="Muller H."/>
            <person name="Nicaud J.-M."/>
            <person name="Nikolski M."/>
            <person name="Oztas S."/>
            <person name="Ozier-Kalogeropoulos O."/>
            <person name="Pellenz S."/>
            <person name="Potier S."/>
            <person name="Richard G.-F."/>
            <person name="Straub M.-L."/>
            <person name="Suleau A."/>
            <person name="Swennen D."/>
            <person name="Tekaia F."/>
            <person name="Wesolowski-Louvel M."/>
            <person name="Westhof E."/>
            <person name="Wirth B."/>
            <person name="Zeniou-Meyer M."/>
            <person name="Zivanovic Y."/>
            <person name="Bolotin-Fukuhara M."/>
            <person name="Thierry A."/>
            <person name="Bouchier C."/>
            <person name="Caudron B."/>
            <person name="Scarpelli C."/>
            <person name="Gaillardin C."/>
            <person name="Weissenbach J."/>
            <person name="Wincker P."/>
            <person name="Souciet J.-L."/>
        </authorList>
    </citation>
    <scope>NUCLEOTIDE SEQUENCE [LARGE SCALE GENOMIC DNA]</scope>
    <source>
        <strain>ATCC 2001 / BCRC 20586 / JCM 3761 / NBRC 0622 / NRRL Y-65 / CBS 138</strain>
    </source>
</reference>
<evidence type="ECO:0000250" key="1"/>
<evidence type="ECO:0000255" key="2">
    <source>
        <dbReference type="PROSITE-ProRule" id="PRU00541"/>
    </source>
</evidence>
<evidence type="ECO:0000255" key="3">
    <source>
        <dbReference type="PROSITE-ProRule" id="PRU00542"/>
    </source>
</evidence>
<evidence type="ECO:0000256" key="4">
    <source>
        <dbReference type="SAM" id="MobiDB-lite"/>
    </source>
</evidence>
<evidence type="ECO:0000305" key="5"/>